<protein>
    <recommendedName>
        <fullName evidence="1">3-octaprenyl-4-hydroxybenzoate carboxy-lyase</fullName>
        <ecNumber evidence="1">4.1.1.98</ecNumber>
    </recommendedName>
    <alternativeName>
        <fullName evidence="1">Polyprenyl p-hydroxybenzoate decarboxylase</fullName>
    </alternativeName>
</protein>
<keyword id="KW-1003">Cell membrane</keyword>
<keyword id="KW-0210">Decarboxylase</keyword>
<keyword id="KW-0285">Flavoprotein</keyword>
<keyword id="KW-0288">FMN</keyword>
<keyword id="KW-0456">Lyase</keyword>
<keyword id="KW-0464">Manganese</keyword>
<keyword id="KW-0472">Membrane</keyword>
<keyword id="KW-0479">Metal-binding</keyword>
<keyword id="KW-1185">Reference proteome</keyword>
<keyword id="KW-0831">Ubiquinone biosynthesis</keyword>
<feature type="chain" id="PRO_0000267646" description="3-octaprenyl-4-hydroxybenzoate carboxy-lyase">
    <location>
        <begin position="1"/>
        <end position="496"/>
    </location>
</feature>
<feature type="active site" description="Proton donor" evidence="1">
    <location>
        <position position="296"/>
    </location>
</feature>
<feature type="binding site" evidence="1">
    <location>
        <position position="181"/>
    </location>
    <ligand>
        <name>Mn(2+)</name>
        <dbReference type="ChEBI" id="CHEBI:29035"/>
    </ligand>
</feature>
<feature type="binding site" evidence="1">
    <location>
        <begin position="184"/>
        <end position="186"/>
    </location>
    <ligand>
        <name>prenylated FMN</name>
        <dbReference type="ChEBI" id="CHEBI:87746"/>
    </ligand>
</feature>
<feature type="binding site" evidence="1">
    <location>
        <begin position="198"/>
        <end position="200"/>
    </location>
    <ligand>
        <name>prenylated FMN</name>
        <dbReference type="ChEBI" id="CHEBI:87746"/>
    </ligand>
</feature>
<feature type="binding site" evidence="1">
    <location>
        <begin position="203"/>
        <end position="204"/>
    </location>
    <ligand>
        <name>prenylated FMN</name>
        <dbReference type="ChEBI" id="CHEBI:87746"/>
    </ligand>
</feature>
<feature type="binding site" evidence="1">
    <location>
        <position position="247"/>
    </location>
    <ligand>
        <name>Mn(2+)</name>
        <dbReference type="ChEBI" id="CHEBI:29035"/>
    </ligand>
</feature>
<name>UBID_AROAE</name>
<dbReference type="EC" id="4.1.1.98" evidence="1"/>
<dbReference type="EMBL" id="CR555306">
    <property type="protein sequence ID" value="CAI07386.1"/>
    <property type="molecule type" value="Genomic_DNA"/>
</dbReference>
<dbReference type="RefSeq" id="WP_011237106.1">
    <property type="nucleotide sequence ID" value="NC_006513.1"/>
</dbReference>
<dbReference type="SMR" id="Q5P5M6"/>
<dbReference type="STRING" id="76114.ebA2286"/>
<dbReference type="KEGG" id="eba:ebA2286"/>
<dbReference type="eggNOG" id="COG0043">
    <property type="taxonomic scope" value="Bacteria"/>
</dbReference>
<dbReference type="HOGENOM" id="CLU_023348_4_1_4"/>
<dbReference type="OrthoDB" id="9809841at2"/>
<dbReference type="UniPathway" id="UPA00232"/>
<dbReference type="Proteomes" id="UP000006552">
    <property type="component" value="Chromosome"/>
</dbReference>
<dbReference type="GO" id="GO:0005829">
    <property type="term" value="C:cytosol"/>
    <property type="evidence" value="ECO:0007669"/>
    <property type="project" value="TreeGrafter"/>
</dbReference>
<dbReference type="GO" id="GO:0005886">
    <property type="term" value="C:plasma membrane"/>
    <property type="evidence" value="ECO:0007669"/>
    <property type="project" value="UniProtKB-SubCell"/>
</dbReference>
<dbReference type="GO" id="GO:0008694">
    <property type="term" value="F:3-octaprenyl-4-hydroxybenzoate carboxy-lyase activity"/>
    <property type="evidence" value="ECO:0007669"/>
    <property type="project" value="UniProtKB-UniRule"/>
</dbReference>
<dbReference type="GO" id="GO:0046872">
    <property type="term" value="F:metal ion binding"/>
    <property type="evidence" value="ECO:0007669"/>
    <property type="project" value="UniProtKB-KW"/>
</dbReference>
<dbReference type="GO" id="GO:0006744">
    <property type="term" value="P:ubiquinone biosynthetic process"/>
    <property type="evidence" value="ECO:0007669"/>
    <property type="project" value="UniProtKB-UniRule"/>
</dbReference>
<dbReference type="FunFam" id="1.20.5.570:FF:000001">
    <property type="entry name" value="3-octaprenyl-4-hydroxybenzoate carboxy-lyase"/>
    <property type="match status" value="1"/>
</dbReference>
<dbReference type="FunFam" id="3.40.1670.10:FF:000001">
    <property type="entry name" value="3-octaprenyl-4-hydroxybenzoate carboxy-lyase"/>
    <property type="match status" value="1"/>
</dbReference>
<dbReference type="Gene3D" id="1.20.5.570">
    <property type="entry name" value="Single helix bin"/>
    <property type="match status" value="1"/>
</dbReference>
<dbReference type="Gene3D" id="3.40.1670.10">
    <property type="entry name" value="UbiD C-terminal domain-like"/>
    <property type="match status" value="1"/>
</dbReference>
<dbReference type="HAMAP" id="MF_01636">
    <property type="entry name" value="UbiD"/>
    <property type="match status" value="1"/>
</dbReference>
<dbReference type="InterPro" id="IPR002830">
    <property type="entry name" value="UbiD"/>
</dbReference>
<dbReference type="InterPro" id="IPR049381">
    <property type="entry name" value="UbiD-like_C"/>
</dbReference>
<dbReference type="InterPro" id="IPR049383">
    <property type="entry name" value="UbiD-like_N"/>
</dbReference>
<dbReference type="InterPro" id="IPR023677">
    <property type="entry name" value="UbiD_bacteria"/>
</dbReference>
<dbReference type="InterPro" id="IPR048304">
    <property type="entry name" value="UbiD_Rift_dom"/>
</dbReference>
<dbReference type="NCBIfam" id="NF008175">
    <property type="entry name" value="PRK10922.1"/>
    <property type="match status" value="1"/>
</dbReference>
<dbReference type="NCBIfam" id="TIGR00148">
    <property type="entry name" value="UbiD family decarboxylase"/>
    <property type="match status" value="1"/>
</dbReference>
<dbReference type="PANTHER" id="PTHR30108">
    <property type="entry name" value="3-OCTAPRENYL-4-HYDROXYBENZOATE CARBOXY-LYASE-RELATED"/>
    <property type="match status" value="1"/>
</dbReference>
<dbReference type="PANTHER" id="PTHR30108:SF17">
    <property type="entry name" value="FERULIC ACID DECARBOXYLASE 1"/>
    <property type="match status" value="1"/>
</dbReference>
<dbReference type="Pfam" id="PF01977">
    <property type="entry name" value="UbiD"/>
    <property type="match status" value="1"/>
</dbReference>
<dbReference type="Pfam" id="PF20696">
    <property type="entry name" value="UbiD_C"/>
    <property type="match status" value="1"/>
</dbReference>
<dbReference type="Pfam" id="PF20695">
    <property type="entry name" value="UbiD_N"/>
    <property type="match status" value="1"/>
</dbReference>
<dbReference type="SUPFAM" id="SSF50475">
    <property type="entry name" value="FMN-binding split barrel"/>
    <property type="match status" value="1"/>
</dbReference>
<dbReference type="SUPFAM" id="SSF143968">
    <property type="entry name" value="UbiD C-terminal domain-like"/>
    <property type="match status" value="1"/>
</dbReference>
<organism>
    <name type="scientific">Aromatoleum aromaticum (strain DSM 19018 / LMG 30748 / EbN1)</name>
    <name type="common">Azoarcus sp. (strain EbN1)</name>
    <dbReference type="NCBI Taxonomy" id="76114"/>
    <lineage>
        <taxon>Bacteria</taxon>
        <taxon>Pseudomonadati</taxon>
        <taxon>Pseudomonadota</taxon>
        <taxon>Betaproteobacteria</taxon>
        <taxon>Rhodocyclales</taxon>
        <taxon>Rhodocyclaceae</taxon>
        <taxon>Aromatoleum</taxon>
    </lineage>
</organism>
<accession>Q5P5M6</accession>
<reference key="1">
    <citation type="journal article" date="2005" name="Arch. Microbiol.">
        <title>The genome sequence of an anaerobic aromatic-degrading denitrifying bacterium, strain EbN1.</title>
        <authorList>
            <person name="Rabus R."/>
            <person name="Kube M."/>
            <person name="Heider J."/>
            <person name="Beck A."/>
            <person name="Heitmann K."/>
            <person name="Widdel F."/>
            <person name="Reinhardt R."/>
        </authorList>
    </citation>
    <scope>NUCLEOTIDE SEQUENCE [LARGE SCALE GENOMIC DNA]</scope>
    <source>
        <strain>DSM 19018 / LMG 30748 / EbN1</strain>
    </source>
</reference>
<comment type="function">
    <text evidence="1">Catalyzes the decarboxylation of 3-octaprenyl-4-hydroxy benzoate to 2-octaprenylphenol, an intermediate step in ubiquinone biosynthesis.</text>
</comment>
<comment type="catalytic activity">
    <reaction evidence="1">
        <text>a 4-hydroxy-3-(all-trans-polyprenyl)benzoate + H(+) = a 2-(all-trans-polyprenyl)phenol + CO2</text>
        <dbReference type="Rhea" id="RHEA:41680"/>
        <dbReference type="Rhea" id="RHEA-COMP:9514"/>
        <dbReference type="Rhea" id="RHEA-COMP:9516"/>
        <dbReference type="ChEBI" id="CHEBI:1269"/>
        <dbReference type="ChEBI" id="CHEBI:15378"/>
        <dbReference type="ChEBI" id="CHEBI:16526"/>
        <dbReference type="ChEBI" id="CHEBI:78396"/>
        <dbReference type="EC" id="4.1.1.98"/>
    </reaction>
</comment>
<comment type="cofactor">
    <cofactor evidence="1">
        <name>prenylated FMN</name>
        <dbReference type="ChEBI" id="CHEBI:87746"/>
    </cofactor>
    <text evidence="1">Binds 1 prenylated FMN per subunit.</text>
</comment>
<comment type="cofactor">
    <cofactor evidence="1">
        <name>Mn(2+)</name>
        <dbReference type="ChEBI" id="CHEBI:29035"/>
    </cofactor>
</comment>
<comment type="pathway">
    <text evidence="1">Cofactor biosynthesis; ubiquinone biosynthesis.</text>
</comment>
<comment type="subunit">
    <text evidence="1">Homohexamer.</text>
</comment>
<comment type="subcellular location">
    <subcellularLocation>
        <location evidence="1">Cell membrane</location>
        <topology evidence="1">Peripheral membrane protein</topology>
    </subcellularLocation>
</comment>
<comment type="similarity">
    <text evidence="1">Belongs to the UbiD family.</text>
</comment>
<proteinExistence type="inferred from homology"/>
<evidence type="ECO:0000255" key="1">
    <source>
        <dbReference type="HAMAP-Rule" id="MF_01636"/>
    </source>
</evidence>
<sequence>MKYQDLRDFIVQLEERGELKRISAPVDTHLEMTEIADRVLRAGGPALLFEQPVTRGVAQAMPVLANLFGTPQRVALGMGEELADGDWQTPLREVGSLLAFLKEPEPPKGFRDAWEKLPVFRQVLNMAPKEVRSAPCQEVVWEGADVDLARLPIQHCWPGDVAPLITWGLVVTRGPGKKRQNLGIYRQQVLSRDRVIMRWLAHRGGALDFRDHQQASSGEAFPVAVVLGCDPATILGAVTPVPDSLSEYQFAGLLRGAKTELVKCMGSDLQVPASAEIVLEGVIHPGDTAAEGPYGDHTGYYNEVSEFPVFTIDRITMRRDPIYHSTYTGKPPDEPAMLGLALNEVFVPLLQRQYPEIVDFYLPPEGCSYRLAVVSIRKQYPGHAKRVMFGIWSFLRQFMYTKFIIVVDDDVAIRDWKEVIWALTTRVDATRDTVLVDNTPIDYLDFASPVASLGSKMGLDATNKWPGETTREWGRPIVMDDVVKARVDAMWDELGL</sequence>
<gene>
    <name evidence="1" type="primary">ubiD</name>
    <name type="ordered locus">AZOSEA12610</name>
    <name type="ORF">ebA2286</name>
</gene>